<protein>
    <recommendedName>
        <fullName evidence="1">Transcription termination/antitermination protein NusG</fullName>
    </recommendedName>
</protein>
<name>NUSG_STAAC</name>
<keyword id="KW-0804">Transcription</keyword>
<keyword id="KW-0889">Transcription antitermination</keyword>
<keyword id="KW-0805">Transcription regulation</keyword>
<keyword id="KW-0806">Transcription termination</keyword>
<evidence type="ECO:0000255" key="1">
    <source>
        <dbReference type="HAMAP-Rule" id="MF_00948"/>
    </source>
</evidence>
<comment type="function">
    <text evidence="1">Participates in transcription elongation, termination and antitermination.</text>
</comment>
<comment type="similarity">
    <text evidence="1">Belongs to the NusG family.</text>
</comment>
<reference key="1">
    <citation type="journal article" date="2005" name="J. Bacteriol.">
        <title>Insights on evolution of virulence and resistance from the complete genome analysis of an early methicillin-resistant Staphylococcus aureus strain and a biofilm-producing methicillin-resistant Staphylococcus epidermidis strain.</title>
        <authorList>
            <person name="Gill S.R."/>
            <person name="Fouts D.E."/>
            <person name="Archer G.L."/>
            <person name="Mongodin E.F."/>
            <person name="DeBoy R.T."/>
            <person name="Ravel J."/>
            <person name="Paulsen I.T."/>
            <person name="Kolonay J.F."/>
            <person name="Brinkac L.M."/>
            <person name="Beanan M.J."/>
            <person name="Dodson R.J."/>
            <person name="Daugherty S.C."/>
            <person name="Madupu R."/>
            <person name="Angiuoli S.V."/>
            <person name="Durkin A.S."/>
            <person name="Haft D.H."/>
            <person name="Vamathevan J.J."/>
            <person name="Khouri H."/>
            <person name="Utterback T.R."/>
            <person name="Lee C."/>
            <person name="Dimitrov G."/>
            <person name="Jiang L."/>
            <person name="Qin H."/>
            <person name="Weidman J."/>
            <person name="Tran K."/>
            <person name="Kang K.H."/>
            <person name="Hance I.R."/>
            <person name="Nelson K.E."/>
            <person name="Fraser C.M."/>
        </authorList>
    </citation>
    <scope>NUCLEOTIDE SEQUENCE [LARGE SCALE GENOMIC DNA]</scope>
    <source>
        <strain>COL</strain>
    </source>
</reference>
<feature type="chain" id="PRO_0000113947" description="Transcription termination/antitermination protein NusG">
    <location>
        <begin position="1"/>
        <end position="182"/>
    </location>
</feature>
<feature type="domain" description="KOW" evidence="1">
    <location>
        <begin position="131"/>
        <end position="163"/>
    </location>
</feature>
<accession>Q5HID9</accession>
<gene>
    <name evidence="1" type="primary">nusG</name>
    <name type="ordered locus">SACOL0582</name>
</gene>
<organism>
    <name type="scientific">Staphylococcus aureus (strain COL)</name>
    <dbReference type="NCBI Taxonomy" id="93062"/>
    <lineage>
        <taxon>Bacteria</taxon>
        <taxon>Bacillati</taxon>
        <taxon>Bacillota</taxon>
        <taxon>Bacilli</taxon>
        <taxon>Bacillales</taxon>
        <taxon>Staphylococcaceae</taxon>
        <taxon>Staphylococcus</taxon>
    </lineage>
</organism>
<proteinExistence type="inferred from homology"/>
<sequence>MSEEVGAKRWYAVHTYSGYENKVKKNLEKRVESMNMTEQIFRVVIPEEEETQVKDGKAKTTVKKTFPGYVLVELIMTDESWYVVRNTPGVTGFVGSAGAGSKPNPLLPEEVRFILKQMGLKEKTIDVELEVGEQVRIKSGPFANQVGEVQEIETDKFKLTVLVDMFGRETPVEVEFDQIEKL</sequence>
<dbReference type="EMBL" id="CP000046">
    <property type="protein sequence ID" value="AAW37692.1"/>
    <property type="molecule type" value="Genomic_DNA"/>
</dbReference>
<dbReference type="RefSeq" id="WP_001288302.1">
    <property type="nucleotide sequence ID" value="NZ_JBGOFO010000009.1"/>
</dbReference>
<dbReference type="SMR" id="Q5HID9"/>
<dbReference type="KEGG" id="sac:SACOL0582"/>
<dbReference type="HOGENOM" id="CLU_067287_1_1_9"/>
<dbReference type="Proteomes" id="UP000000530">
    <property type="component" value="Chromosome"/>
</dbReference>
<dbReference type="GO" id="GO:0005829">
    <property type="term" value="C:cytosol"/>
    <property type="evidence" value="ECO:0007669"/>
    <property type="project" value="TreeGrafter"/>
</dbReference>
<dbReference type="GO" id="GO:0006353">
    <property type="term" value="P:DNA-templated transcription termination"/>
    <property type="evidence" value="ECO:0007669"/>
    <property type="project" value="UniProtKB-UniRule"/>
</dbReference>
<dbReference type="GO" id="GO:0032784">
    <property type="term" value="P:regulation of DNA-templated transcription elongation"/>
    <property type="evidence" value="ECO:0007669"/>
    <property type="project" value="InterPro"/>
</dbReference>
<dbReference type="GO" id="GO:0031564">
    <property type="term" value="P:transcription antitermination"/>
    <property type="evidence" value="ECO:0007669"/>
    <property type="project" value="UniProtKB-UniRule"/>
</dbReference>
<dbReference type="GO" id="GO:0140673">
    <property type="term" value="P:transcription elongation-coupled chromatin remodeling"/>
    <property type="evidence" value="ECO:0007669"/>
    <property type="project" value="InterPro"/>
</dbReference>
<dbReference type="CDD" id="cd06091">
    <property type="entry name" value="KOW_NusG"/>
    <property type="match status" value="1"/>
</dbReference>
<dbReference type="CDD" id="cd09891">
    <property type="entry name" value="NGN_Bact_1"/>
    <property type="match status" value="1"/>
</dbReference>
<dbReference type="FunFam" id="2.30.30.30:FF:000002">
    <property type="entry name" value="Transcription termination/antitermination factor NusG"/>
    <property type="match status" value="1"/>
</dbReference>
<dbReference type="FunFam" id="3.30.70.940:FF:000002">
    <property type="entry name" value="Transcription termination/antitermination protein NusG"/>
    <property type="match status" value="1"/>
</dbReference>
<dbReference type="Gene3D" id="2.30.30.30">
    <property type="match status" value="1"/>
</dbReference>
<dbReference type="Gene3D" id="3.30.70.940">
    <property type="entry name" value="NusG, N-terminal domain"/>
    <property type="match status" value="1"/>
</dbReference>
<dbReference type="HAMAP" id="MF_00948">
    <property type="entry name" value="NusG"/>
    <property type="match status" value="1"/>
</dbReference>
<dbReference type="InterPro" id="IPR005824">
    <property type="entry name" value="KOW"/>
</dbReference>
<dbReference type="InterPro" id="IPR047050">
    <property type="entry name" value="NGN"/>
</dbReference>
<dbReference type="InterPro" id="IPR006645">
    <property type="entry name" value="NGN-like_dom"/>
</dbReference>
<dbReference type="InterPro" id="IPR036735">
    <property type="entry name" value="NGN_dom_sf"/>
</dbReference>
<dbReference type="InterPro" id="IPR043425">
    <property type="entry name" value="NusG-like"/>
</dbReference>
<dbReference type="InterPro" id="IPR014722">
    <property type="entry name" value="Rib_uL2_dom2"/>
</dbReference>
<dbReference type="InterPro" id="IPR001062">
    <property type="entry name" value="Transcrpt_antiterm_NusG"/>
</dbReference>
<dbReference type="InterPro" id="IPR015869">
    <property type="entry name" value="Transcrpt_antiterm_NusG_bac_CS"/>
</dbReference>
<dbReference type="InterPro" id="IPR008991">
    <property type="entry name" value="Translation_prot_SH3-like_sf"/>
</dbReference>
<dbReference type="NCBIfam" id="TIGR00922">
    <property type="entry name" value="nusG"/>
    <property type="match status" value="1"/>
</dbReference>
<dbReference type="PANTHER" id="PTHR30265">
    <property type="entry name" value="RHO-INTERACTING TRANSCRIPTION TERMINATION FACTOR NUSG"/>
    <property type="match status" value="1"/>
</dbReference>
<dbReference type="PANTHER" id="PTHR30265:SF2">
    <property type="entry name" value="TRANSCRIPTION TERMINATION_ANTITERMINATION PROTEIN NUSG"/>
    <property type="match status" value="1"/>
</dbReference>
<dbReference type="Pfam" id="PF00467">
    <property type="entry name" value="KOW"/>
    <property type="match status" value="1"/>
</dbReference>
<dbReference type="Pfam" id="PF02357">
    <property type="entry name" value="NusG"/>
    <property type="match status" value="1"/>
</dbReference>
<dbReference type="PRINTS" id="PR00338">
    <property type="entry name" value="NUSGTNSCPFCT"/>
</dbReference>
<dbReference type="SMART" id="SM00739">
    <property type="entry name" value="KOW"/>
    <property type="match status" value="1"/>
</dbReference>
<dbReference type="SMART" id="SM00738">
    <property type="entry name" value="NGN"/>
    <property type="match status" value="1"/>
</dbReference>
<dbReference type="SUPFAM" id="SSF82679">
    <property type="entry name" value="N-utilization substance G protein NusG, N-terminal domain"/>
    <property type="match status" value="1"/>
</dbReference>
<dbReference type="SUPFAM" id="SSF50104">
    <property type="entry name" value="Translation proteins SH3-like domain"/>
    <property type="match status" value="1"/>
</dbReference>
<dbReference type="PROSITE" id="PS01014">
    <property type="entry name" value="NUSG"/>
    <property type="match status" value="1"/>
</dbReference>